<comment type="function">
    <text evidence="1">This b-type cytochrome is tightly associated with the reaction center of photosystem II (PSII). PSII is a light-driven water:plastoquinone oxidoreductase that uses light energy to abstract electrons from H(2)O, generating O(2) and a proton gradient subsequently used for ATP formation. It consists of a core antenna complex that captures photons, and an electron transfer chain that converts photonic excitation into a charge separation.</text>
</comment>
<comment type="cofactor">
    <cofactor evidence="1">
        <name>heme b</name>
        <dbReference type="ChEBI" id="CHEBI:60344"/>
    </cofactor>
    <text evidence="1">With its partner (PsbE) binds heme. PSII binds additional chlorophylls, carotenoids and specific lipids.</text>
</comment>
<comment type="subunit">
    <text evidence="2">Heterodimer of an alpha subunit and a beta subunit. PSII is composed of 1 copy each of membrane proteins PsbA, PsbB, PsbC, PsbD, PsbE, PsbF, PsbH, PsbI, PsbJ, PsbK, PsbL, PsbM, PsbT, PsbX, PsbY, Psb30/Ycf12, peripheral proteins PsbO, CyanoQ (PsbQ), PsbU, PsbV and a large number of cofactors. It forms dimeric complexes.</text>
</comment>
<comment type="subcellular location">
    <subcellularLocation>
        <location evidence="1">Cellular thylakoid membrane</location>
        <topology evidence="1">Single-pass membrane protein</topology>
    </subcellularLocation>
</comment>
<comment type="similarity">
    <text evidence="1">Belongs to the PsbE/PsbF family.</text>
</comment>
<evidence type="ECO:0000255" key="1">
    <source>
        <dbReference type="HAMAP-Rule" id="MF_00643"/>
    </source>
</evidence>
<evidence type="ECO:0000305" key="2"/>
<sequence>MTNSQAPMQAAEVRVYPIFTVRWLAVHALAIPSVFFLGSIAAMQFVAR</sequence>
<feature type="chain" id="PRO_1000056936" description="Cytochrome b559 subunit beta">
    <location>
        <begin position="1"/>
        <end position="48"/>
    </location>
</feature>
<feature type="transmembrane region" description="Helical" evidence="1">
    <location>
        <begin position="23"/>
        <end position="39"/>
    </location>
</feature>
<feature type="binding site" description="axial binding residue" evidence="1">
    <location>
        <position position="27"/>
    </location>
    <ligand>
        <name>heme</name>
        <dbReference type="ChEBI" id="CHEBI:30413"/>
        <note>ligand shared with alpha subunit</note>
    </ligand>
    <ligandPart>
        <name>Fe</name>
        <dbReference type="ChEBI" id="CHEBI:18248"/>
    </ligandPart>
</feature>
<name>PSBF_PROM0</name>
<reference key="1">
    <citation type="journal article" date="2007" name="PLoS Genet.">
        <title>Patterns and implications of gene gain and loss in the evolution of Prochlorococcus.</title>
        <authorList>
            <person name="Kettler G.C."/>
            <person name="Martiny A.C."/>
            <person name="Huang K."/>
            <person name="Zucker J."/>
            <person name="Coleman M.L."/>
            <person name="Rodrigue S."/>
            <person name="Chen F."/>
            <person name="Lapidus A."/>
            <person name="Ferriera S."/>
            <person name="Johnson J."/>
            <person name="Steglich C."/>
            <person name="Church G.M."/>
            <person name="Richardson P."/>
            <person name="Chisholm S.W."/>
        </authorList>
    </citation>
    <scope>NUCLEOTIDE SEQUENCE [LARGE SCALE GENOMIC DNA]</scope>
    <source>
        <strain>MIT 9301</strain>
    </source>
</reference>
<gene>
    <name evidence="1" type="primary">psbF</name>
    <name type="ordered locus">P9301_03221</name>
</gene>
<accession>A3PB20</accession>
<protein>
    <recommendedName>
        <fullName evidence="1">Cytochrome b559 subunit beta</fullName>
    </recommendedName>
    <alternativeName>
        <fullName evidence="1">PSII reaction center subunit VI</fullName>
    </alternativeName>
</protein>
<dbReference type="EMBL" id="CP000576">
    <property type="protein sequence ID" value="ABO16945.1"/>
    <property type="molecule type" value="Genomic_DNA"/>
</dbReference>
<dbReference type="RefSeq" id="WP_011375863.1">
    <property type="nucleotide sequence ID" value="NC_009091.1"/>
</dbReference>
<dbReference type="STRING" id="167546.P9301_03221"/>
<dbReference type="KEGG" id="pmg:P9301_03221"/>
<dbReference type="HOGENOM" id="CLU_211753_1_0_3"/>
<dbReference type="OrthoDB" id="532613at2"/>
<dbReference type="Proteomes" id="UP000001430">
    <property type="component" value="Chromosome"/>
</dbReference>
<dbReference type="GO" id="GO:0009539">
    <property type="term" value="C:photosystem II reaction center"/>
    <property type="evidence" value="ECO:0007669"/>
    <property type="project" value="InterPro"/>
</dbReference>
<dbReference type="GO" id="GO:0031676">
    <property type="term" value="C:plasma membrane-derived thylakoid membrane"/>
    <property type="evidence" value="ECO:0007669"/>
    <property type="project" value="UniProtKB-SubCell"/>
</dbReference>
<dbReference type="GO" id="GO:0009055">
    <property type="term" value="F:electron transfer activity"/>
    <property type="evidence" value="ECO:0007669"/>
    <property type="project" value="UniProtKB-UniRule"/>
</dbReference>
<dbReference type="GO" id="GO:0020037">
    <property type="term" value="F:heme binding"/>
    <property type="evidence" value="ECO:0007669"/>
    <property type="project" value="InterPro"/>
</dbReference>
<dbReference type="GO" id="GO:0005506">
    <property type="term" value="F:iron ion binding"/>
    <property type="evidence" value="ECO:0007669"/>
    <property type="project" value="UniProtKB-UniRule"/>
</dbReference>
<dbReference type="GO" id="GO:0009767">
    <property type="term" value="P:photosynthetic electron transport chain"/>
    <property type="evidence" value="ECO:0007669"/>
    <property type="project" value="InterPro"/>
</dbReference>
<dbReference type="HAMAP" id="MF_00643">
    <property type="entry name" value="PSII_PsbF"/>
    <property type="match status" value="1"/>
</dbReference>
<dbReference type="InterPro" id="IPR006241">
    <property type="entry name" value="PSII_cyt_b559_bsu"/>
</dbReference>
<dbReference type="InterPro" id="IPR006216">
    <property type="entry name" value="PSII_cyt_b559_CS"/>
</dbReference>
<dbReference type="InterPro" id="IPR013081">
    <property type="entry name" value="PSII_cyt_b559_N"/>
</dbReference>
<dbReference type="NCBIfam" id="TIGR01333">
    <property type="entry name" value="cyt_b559_beta"/>
    <property type="match status" value="1"/>
</dbReference>
<dbReference type="Pfam" id="PF00283">
    <property type="entry name" value="Cytochrom_B559"/>
    <property type="match status" value="1"/>
</dbReference>
<dbReference type="PIRSF" id="PIRSF000037">
    <property type="entry name" value="PsbF"/>
    <property type="match status" value="1"/>
</dbReference>
<dbReference type="SUPFAM" id="SSF161045">
    <property type="entry name" value="Cytochrome b559 subunits"/>
    <property type="match status" value="1"/>
</dbReference>
<dbReference type="PROSITE" id="PS00537">
    <property type="entry name" value="CYTOCHROME_B559"/>
    <property type="match status" value="1"/>
</dbReference>
<proteinExistence type="inferred from homology"/>
<organism>
    <name type="scientific">Prochlorococcus marinus (strain MIT 9301)</name>
    <dbReference type="NCBI Taxonomy" id="167546"/>
    <lineage>
        <taxon>Bacteria</taxon>
        <taxon>Bacillati</taxon>
        <taxon>Cyanobacteriota</taxon>
        <taxon>Cyanophyceae</taxon>
        <taxon>Synechococcales</taxon>
        <taxon>Prochlorococcaceae</taxon>
        <taxon>Prochlorococcus</taxon>
    </lineage>
</organism>
<keyword id="KW-0249">Electron transport</keyword>
<keyword id="KW-0349">Heme</keyword>
<keyword id="KW-0408">Iron</keyword>
<keyword id="KW-0472">Membrane</keyword>
<keyword id="KW-0479">Metal-binding</keyword>
<keyword id="KW-0602">Photosynthesis</keyword>
<keyword id="KW-0604">Photosystem II</keyword>
<keyword id="KW-1185">Reference proteome</keyword>
<keyword id="KW-0793">Thylakoid</keyword>
<keyword id="KW-0812">Transmembrane</keyword>
<keyword id="KW-1133">Transmembrane helix</keyword>
<keyword id="KW-0813">Transport</keyword>